<dbReference type="EC" id="4.2.1.20" evidence="1"/>
<dbReference type="EMBL" id="BX571661">
    <property type="protein sequence ID" value="CAE10842.1"/>
    <property type="molecule type" value="Genomic_DNA"/>
</dbReference>
<dbReference type="SMR" id="Q7M877"/>
<dbReference type="STRING" id="273121.WS1827"/>
<dbReference type="KEGG" id="wsu:WS1827"/>
<dbReference type="eggNOG" id="COG0159">
    <property type="taxonomic scope" value="Bacteria"/>
</dbReference>
<dbReference type="HOGENOM" id="CLU_016734_0_2_7"/>
<dbReference type="UniPathway" id="UPA00035">
    <property type="reaction ID" value="UER00044"/>
</dbReference>
<dbReference type="Proteomes" id="UP000000422">
    <property type="component" value="Chromosome"/>
</dbReference>
<dbReference type="GO" id="GO:0005829">
    <property type="term" value="C:cytosol"/>
    <property type="evidence" value="ECO:0007669"/>
    <property type="project" value="TreeGrafter"/>
</dbReference>
<dbReference type="GO" id="GO:0004834">
    <property type="term" value="F:tryptophan synthase activity"/>
    <property type="evidence" value="ECO:0007669"/>
    <property type="project" value="UniProtKB-UniRule"/>
</dbReference>
<dbReference type="CDD" id="cd04724">
    <property type="entry name" value="Tryptophan_synthase_alpha"/>
    <property type="match status" value="1"/>
</dbReference>
<dbReference type="Gene3D" id="3.20.20.70">
    <property type="entry name" value="Aldolase class I"/>
    <property type="match status" value="1"/>
</dbReference>
<dbReference type="HAMAP" id="MF_00131">
    <property type="entry name" value="Trp_synth_alpha"/>
    <property type="match status" value="1"/>
</dbReference>
<dbReference type="InterPro" id="IPR013785">
    <property type="entry name" value="Aldolase_TIM"/>
</dbReference>
<dbReference type="InterPro" id="IPR011060">
    <property type="entry name" value="RibuloseP-bd_barrel"/>
</dbReference>
<dbReference type="InterPro" id="IPR018204">
    <property type="entry name" value="Trp_synthase_alpha_AS"/>
</dbReference>
<dbReference type="InterPro" id="IPR002028">
    <property type="entry name" value="Trp_synthase_suA"/>
</dbReference>
<dbReference type="NCBIfam" id="TIGR00262">
    <property type="entry name" value="trpA"/>
    <property type="match status" value="1"/>
</dbReference>
<dbReference type="PANTHER" id="PTHR43406:SF1">
    <property type="entry name" value="TRYPTOPHAN SYNTHASE ALPHA CHAIN, CHLOROPLASTIC"/>
    <property type="match status" value="1"/>
</dbReference>
<dbReference type="PANTHER" id="PTHR43406">
    <property type="entry name" value="TRYPTOPHAN SYNTHASE, ALPHA CHAIN"/>
    <property type="match status" value="1"/>
</dbReference>
<dbReference type="Pfam" id="PF00290">
    <property type="entry name" value="Trp_syntA"/>
    <property type="match status" value="1"/>
</dbReference>
<dbReference type="SUPFAM" id="SSF51366">
    <property type="entry name" value="Ribulose-phoshate binding barrel"/>
    <property type="match status" value="1"/>
</dbReference>
<dbReference type="PROSITE" id="PS00167">
    <property type="entry name" value="TRP_SYNTHASE_ALPHA"/>
    <property type="match status" value="1"/>
</dbReference>
<feature type="chain" id="PRO_0000098874" description="Tryptophan synthase alpha chain">
    <location>
        <begin position="1"/>
        <end position="255"/>
    </location>
</feature>
<feature type="active site" description="Proton acceptor" evidence="1">
    <location>
        <position position="42"/>
    </location>
</feature>
<feature type="active site" description="Proton acceptor" evidence="1">
    <location>
        <position position="53"/>
    </location>
</feature>
<keyword id="KW-0028">Amino-acid biosynthesis</keyword>
<keyword id="KW-0057">Aromatic amino acid biosynthesis</keyword>
<keyword id="KW-0456">Lyase</keyword>
<keyword id="KW-1185">Reference proteome</keyword>
<keyword id="KW-0822">Tryptophan biosynthesis</keyword>
<reference key="1">
    <citation type="journal article" date="2003" name="Proc. Natl. Acad. Sci. U.S.A.">
        <title>Complete genome sequence and analysis of Wolinella succinogenes.</title>
        <authorList>
            <person name="Baar C."/>
            <person name="Eppinger M."/>
            <person name="Raddatz G."/>
            <person name="Simon J."/>
            <person name="Lanz C."/>
            <person name="Klimmek O."/>
            <person name="Nandakumar R."/>
            <person name="Gross R."/>
            <person name="Rosinus A."/>
            <person name="Keller H."/>
            <person name="Jagtap P."/>
            <person name="Linke B."/>
            <person name="Meyer F."/>
            <person name="Lederer H."/>
            <person name="Schuster S.C."/>
        </authorList>
    </citation>
    <scope>NUCLEOTIDE SEQUENCE [LARGE SCALE GENOMIC DNA]</scope>
    <source>
        <strain>ATCC 29543 / DSM 1740 / CCUG 13145 / JCM 31913 / LMG 7466 / NCTC 11488 / FDC 602W</strain>
    </source>
</reference>
<evidence type="ECO:0000255" key="1">
    <source>
        <dbReference type="HAMAP-Rule" id="MF_00131"/>
    </source>
</evidence>
<sequence length="255" mass="27668">MESFGVLSMKKLVAYITAALPDKEFTIDLALALSASGVDSLELGVPFSDPVADGPIIEHANLLALQKGFSLQDLYEITEKISPSIDTLWMGYLNPFHKVGFEQTCQKAKSLGVSGLIIPDVPFEESAPFEEQCLQNNLALIRFIAPTLGTSRIATIAPMARKFIYLVAYAGITGSGREEPLSPLIEEIRAINPEIPLYLGFGVNEHNAKEKSKEVDGVIVGSALVKVLLDERLTNTQKMTTICALAKSIKESINS</sequence>
<accession>Q7M877</accession>
<gene>
    <name evidence="1" type="primary">trpA</name>
    <name type="ordered locus">WS1827</name>
</gene>
<comment type="function">
    <text evidence="1">The alpha subunit is responsible for the aldol cleavage of indoleglycerol phosphate to indole and glyceraldehyde 3-phosphate.</text>
</comment>
<comment type="catalytic activity">
    <reaction evidence="1">
        <text>(1S,2R)-1-C-(indol-3-yl)glycerol 3-phosphate + L-serine = D-glyceraldehyde 3-phosphate + L-tryptophan + H2O</text>
        <dbReference type="Rhea" id="RHEA:10532"/>
        <dbReference type="ChEBI" id="CHEBI:15377"/>
        <dbReference type="ChEBI" id="CHEBI:33384"/>
        <dbReference type="ChEBI" id="CHEBI:57912"/>
        <dbReference type="ChEBI" id="CHEBI:58866"/>
        <dbReference type="ChEBI" id="CHEBI:59776"/>
        <dbReference type="EC" id="4.2.1.20"/>
    </reaction>
</comment>
<comment type="pathway">
    <text evidence="1">Amino-acid biosynthesis; L-tryptophan biosynthesis; L-tryptophan from chorismate: step 5/5.</text>
</comment>
<comment type="subunit">
    <text evidence="1">Tetramer of two alpha and two beta chains.</text>
</comment>
<comment type="similarity">
    <text evidence="1">Belongs to the TrpA family.</text>
</comment>
<name>TRPA_WOLSU</name>
<organism>
    <name type="scientific">Wolinella succinogenes (strain ATCC 29543 / DSM 1740 / CCUG 13145 / JCM 31913 / LMG 7466 / NCTC 11488 / FDC 602W)</name>
    <name type="common">Vibrio succinogenes</name>
    <dbReference type="NCBI Taxonomy" id="273121"/>
    <lineage>
        <taxon>Bacteria</taxon>
        <taxon>Pseudomonadati</taxon>
        <taxon>Campylobacterota</taxon>
        <taxon>Epsilonproteobacteria</taxon>
        <taxon>Campylobacterales</taxon>
        <taxon>Helicobacteraceae</taxon>
        <taxon>Wolinella</taxon>
    </lineage>
</organism>
<proteinExistence type="inferred from homology"/>
<protein>
    <recommendedName>
        <fullName evidence="1">Tryptophan synthase alpha chain</fullName>
        <ecNumber evidence="1">4.2.1.20</ecNumber>
    </recommendedName>
</protein>